<organism>
    <name type="scientific">Arabidopsis thaliana</name>
    <name type="common">Mouse-ear cress</name>
    <dbReference type="NCBI Taxonomy" id="3702"/>
    <lineage>
        <taxon>Eukaryota</taxon>
        <taxon>Viridiplantae</taxon>
        <taxon>Streptophyta</taxon>
        <taxon>Embryophyta</taxon>
        <taxon>Tracheophyta</taxon>
        <taxon>Spermatophyta</taxon>
        <taxon>Magnoliopsida</taxon>
        <taxon>eudicotyledons</taxon>
        <taxon>Gunneridae</taxon>
        <taxon>Pentapetalae</taxon>
        <taxon>rosids</taxon>
        <taxon>malvids</taxon>
        <taxon>Brassicales</taxon>
        <taxon>Brassicaceae</taxon>
        <taxon>Camelineae</taxon>
        <taxon>Arabidopsis</taxon>
    </lineage>
</organism>
<proteinExistence type="evidence at protein level"/>
<evidence type="ECO:0000250" key="1">
    <source>
        <dbReference type="UniProtKB" id="Q42578"/>
    </source>
</evidence>
<evidence type="ECO:0000255" key="2"/>
<evidence type="ECO:0000255" key="3">
    <source>
        <dbReference type="PROSITE-ProRule" id="PRU00297"/>
    </source>
</evidence>
<evidence type="ECO:0000255" key="4">
    <source>
        <dbReference type="PROSITE-ProRule" id="PRU10012"/>
    </source>
</evidence>
<evidence type="ECO:0000269" key="5">
    <source>
    </source>
</evidence>
<evidence type="ECO:0000269" key="6">
    <source>
    </source>
</evidence>
<evidence type="ECO:0000269" key="7">
    <source>
    </source>
</evidence>
<evidence type="ECO:0000269" key="8">
    <source>
    </source>
</evidence>
<evidence type="ECO:0000269" key="9">
    <source>
    </source>
</evidence>
<evidence type="ECO:0000269" key="10">
    <source ref="14"/>
</evidence>
<evidence type="ECO:0000305" key="11"/>
<accession>Q9SMU8</accession>
<accession>Q42206</accession>
<accession>Q42584</accession>
<accession>Q9C5R4</accession>
<reference key="1">
    <citation type="journal article" date="1994" name="Plant Physiol.">
        <title>Nucleotide sequence of a new cDNA for peroxidase from Arabidopsis thaliana.</title>
        <authorList>
            <person name="Intapruk C."/>
            <person name="Takano M."/>
            <person name="Shinmyo A."/>
        </authorList>
    </citation>
    <scope>NUCLEOTIDE SEQUENCE [MRNA]</scope>
    <source>
        <strain>cv. Columbia</strain>
    </source>
</reference>
<reference key="2">
    <citation type="journal article" date="2000" name="Nature">
        <title>Sequence and analysis of chromosome 3 of the plant Arabidopsis thaliana.</title>
        <authorList>
            <person name="Salanoubat M."/>
            <person name="Lemcke K."/>
            <person name="Rieger M."/>
            <person name="Ansorge W."/>
            <person name="Unseld M."/>
            <person name="Fartmann B."/>
            <person name="Valle G."/>
            <person name="Bloecker H."/>
            <person name="Perez-Alonso M."/>
            <person name="Obermaier B."/>
            <person name="Delseny M."/>
            <person name="Boutry M."/>
            <person name="Grivell L.A."/>
            <person name="Mache R."/>
            <person name="Puigdomenech P."/>
            <person name="De Simone V."/>
            <person name="Choisne N."/>
            <person name="Artiguenave F."/>
            <person name="Robert C."/>
            <person name="Brottier P."/>
            <person name="Wincker P."/>
            <person name="Cattolico L."/>
            <person name="Weissenbach J."/>
            <person name="Saurin W."/>
            <person name="Quetier F."/>
            <person name="Schaefer M."/>
            <person name="Mueller-Auer S."/>
            <person name="Gabel C."/>
            <person name="Fuchs M."/>
            <person name="Benes V."/>
            <person name="Wurmbach E."/>
            <person name="Drzonek H."/>
            <person name="Erfle H."/>
            <person name="Jordan N."/>
            <person name="Bangert S."/>
            <person name="Wiedelmann R."/>
            <person name="Kranz H."/>
            <person name="Voss H."/>
            <person name="Holland R."/>
            <person name="Brandt P."/>
            <person name="Nyakatura G."/>
            <person name="Vezzi A."/>
            <person name="D'Angelo M."/>
            <person name="Pallavicini A."/>
            <person name="Toppo S."/>
            <person name="Simionati B."/>
            <person name="Conrad A."/>
            <person name="Hornischer K."/>
            <person name="Kauer G."/>
            <person name="Loehnert T.-H."/>
            <person name="Nordsiek G."/>
            <person name="Reichelt J."/>
            <person name="Scharfe M."/>
            <person name="Schoen O."/>
            <person name="Bargues M."/>
            <person name="Terol J."/>
            <person name="Climent J."/>
            <person name="Navarro P."/>
            <person name="Collado C."/>
            <person name="Perez-Perez A."/>
            <person name="Ottenwaelder B."/>
            <person name="Duchemin D."/>
            <person name="Cooke R."/>
            <person name="Laudie M."/>
            <person name="Berger-Llauro C."/>
            <person name="Purnelle B."/>
            <person name="Masuy D."/>
            <person name="de Haan M."/>
            <person name="Maarse A.C."/>
            <person name="Alcaraz J.-P."/>
            <person name="Cottet A."/>
            <person name="Casacuberta E."/>
            <person name="Monfort A."/>
            <person name="Argiriou A."/>
            <person name="Flores M."/>
            <person name="Liguori R."/>
            <person name="Vitale D."/>
            <person name="Mannhaupt G."/>
            <person name="Haase D."/>
            <person name="Schoof H."/>
            <person name="Rudd S."/>
            <person name="Zaccaria P."/>
            <person name="Mewes H.-W."/>
            <person name="Mayer K.F.X."/>
            <person name="Kaul S."/>
            <person name="Town C.D."/>
            <person name="Koo H.L."/>
            <person name="Tallon L.J."/>
            <person name="Jenkins J."/>
            <person name="Rooney T."/>
            <person name="Rizzo M."/>
            <person name="Walts A."/>
            <person name="Utterback T."/>
            <person name="Fujii C.Y."/>
            <person name="Shea T.P."/>
            <person name="Creasy T.H."/>
            <person name="Haas B."/>
            <person name="Maiti R."/>
            <person name="Wu D."/>
            <person name="Peterson J."/>
            <person name="Van Aken S."/>
            <person name="Pai G."/>
            <person name="Militscher J."/>
            <person name="Sellers P."/>
            <person name="Gill J.E."/>
            <person name="Feldblyum T.V."/>
            <person name="Preuss D."/>
            <person name="Lin X."/>
            <person name="Nierman W.C."/>
            <person name="Salzberg S.L."/>
            <person name="White O."/>
            <person name="Venter J.C."/>
            <person name="Fraser C.M."/>
            <person name="Kaneko T."/>
            <person name="Nakamura Y."/>
            <person name="Sato S."/>
            <person name="Kato T."/>
            <person name="Asamizu E."/>
            <person name="Sasamoto S."/>
            <person name="Kimura T."/>
            <person name="Idesawa K."/>
            <person name="Kawashima K."/>
            <person name="Kishida Y."/>
            <person name="Kiyokawa C."/>
            <person name="Kohara M."/>
            <person name="Matsumoto M."/>
            <person name="Matsuno A."/>
            <person name="Muraki A."/>
            <person name="Nakayama S."/>
            <person name="Nakazaki N."/>
            <person name="Shinpo S."/>
            <person name="Takeuchi C."/>
            <person name="Wada T."/>
            <person name="Watanabe A."/>
            <person name="Yamada M."/>
            <person name="Yasuda M."/>
            <person name="Tabata S."/>
        </authorList>
    </citation>
    <scope>NUCLEOTIDE SEQUENCE [LARGE SCALE GENOMIC DNA]</scope>
    <source>
        <strain>cv. Columbia</strain>
    </source>
</reference>
<reference key="3">
    <citation type="journal article" date="2017" name="Plant J.">
        <title>Araport11: a complete reannotation of the Arabidopsis thaliana reference genome.</title>
        <authorList>
            <person name="Cheng C.Y."/>
            <person name="Krishnakumar V."/>
            <person name="Chan A.P."/>
            <person name="Thibaud-Nissen F."/>
            <person name="Schobel S."/>
            <person name="Town C.D."/>
        </authorList>
    </citation>
    <scope>GENOME REANNOTATION</scope>
    <source>
        <strain>cv. Columbia</strain>
    </source>
</reference>
<reference key="4">
    <citation type="journal article" date="2003" name="Science">
        <title>Empirical analysis of transcriptional activity in the Arabidopsis genome.</title>
        <authorList>
            <person name="Yamada K."/>
            <person name="Lim J."/>
            <person name="Dale J.M."/>
            <person name="Chen H."/>
            <person name="Shinn P."/>
            <person name="Palm C.J."/>
            <person name="Southwick A.M."/>
            <person name="Wu H.C."/>
            <person name="Kim C.J."/>
            <person name="Nguyen M."/>
            <person name="Pham P.K."/>
            <person name="Cheuk R.F."/>
            <person name="Karlin-Newmann G."/>
            <person name="Liu S.X."/>
            <person name="Lam B."/>
            <person name="Sakano H."/>
            <person name="Wu T."/>
            <person name="Yu G."/>
            <person name="Miranda M."/>
            <person name="Quach H.L."/>
            <person name="Tripp M."/>
            <person name="Chang C.H."/>
            <person name="Lee J.M."/>
            <person name="Toriumi M.J."/>
            <person name="Chan M.M."/>
            <person name="Tang C.C."/>
            <person name="Onodera C.S."/>
            <person name="Deng J.M."/>
            <person name="Akiyama K."/>
            <person name="Ansari Y."/>
            <person name="Arakawa T."/>
            <person name="Banh J."/>
            <person name="Banno F."/>
            <person name="Bowser L."/>
            <person name="Brooks S.Y."/>
            <person name="Carninci P."/>
            <person name="Chao Q."/>
            <person name="Choy N."/>
            <person name="Enju A."/>
            <person name="Goldsmith A.D."/>
            <person name="Gurjal M."/>
            <person name="Hansen N.F."/>
            <person name="Hayashizaki Y."/>
            <person name="Johnson-Hopson C."/>
            <person name="Hsuan V.W."/>
            <person name="Iida K."/>
            <person name="Karnes M."/>
            <person name="Khan S."/>
            <person name="Koesema E."/>
            <person name="Ishida J."/>
            <person name="Jiang P.X."/>
            <person name="Jones T."/>
            <person name="Kawai J."/>
            <person name="Kamiya A."/>
            <person name="Meyers C."/>
            <person name="Nakajima M."/>
            <person name="Narusaka M."/>
            <person name="Seki M."/>
            <person name="Sakurai T."/>
            <person name="Satou M."/>
            <person name="Tamse R."/>
            <person name="Vaysberg M."/>
            <person name="Wallender E.K."/>
            <person name="Wong C."/>
            <person name="Yamamura Y."/>
            <person name="Yuan S."/>
            <person name="Shinozaki K."/>
            <person name="Davis R.W."/>
            <person name="Theologis A."/>
            <person name="Ecker J.R."/>
        </authorList>
    </citation>
    <scope>NUCLEOTIDE SEQUENCE [LARGE SCALE MRNA]</scope>
    <source>
        <strain>cv. Columbia</strain>
    </source>
</reference>
<reference key="5">
    <citation type="submission" date="2002-03" db="EMBL/GenBank/DDBJ databases">
        <title>Full-length cDNA from Arabidopsis thaliana.</title>
        <authorList>
            <person name="Brover V.V."/>
            <person name="Troukhan M.E."/>
            <person name="Alexandrov N.A."/>
            <person name="Lu Y.-P."/>
            <person name="Flavell R.B."/>
            <person name="Feldmann K.A."/>
        </authorList>
    </citation>
    <scope>NUCLEOTIDE SEQUENCE [LARGE SCALE MRNA]</scope>
</reference>
<reference key="6">
    <citation type="submission" date="1998-08" db="EMBL/GenBank/DDBJ databases">
        <title>Signal peptide selection derived cDNAs from Arabidopsis thaliana leaves and guard cells.</title>
        <authorList>
            <person name="Stracke R."/>
            <person name="Palme K."/>
        </authorList>
    </citation>
    <scope>NUCLEOTIDE SEQUENCE [LARGE SCALE MRNA] OF 1-226</scope>
    <source>
        <tissue>Leaf</tissue>
    </source>
</reference>
<reference key="7">
    <citation type="journal article" date="1996" name="Plant J.">
        <title>Further progress towards a catalogue of all Arabidopsis genes: analysis of a set of 5000 non-redundant ESTs.</title>
        <authorList>
            <person name="Cooke R."/>
            <person name="Raynal M."/>
            <person name="Laudie M."/>
            <person name="Grellet F."/>
            <person name="Delseny M."/>
            <person name="Morris P.-C."/>
            <person name="Guerrier D."/>
            <person name="Giraudat J."/>
            <person name="Quigley F."/>
            <person name="Clabault G."/>
            <person name="Li Y.-F."/>
            <person name="Mache R."/>
            <person name="Krivitzky M."/>
            <person name="Gy I.J.-J."/>
            <person name="Kreis M."/>
            <person name="Lecharny A."/>
            <person name="Parmentier Y."/>
            <person name="Marbach J."/>
            <person name="Fleck J."/>
            <person name="Clement B."/>
            <person name="Philipps G."/>
            <person name="Herve C."/>
            <person name="Bardet C."/>
            <person name="Tremousaygue D."/>
            <person name="Lescure B."/>
            <person name="Lacomme C."/>
            <person name="Roby D."/>
            <person name="Jourjon M.-F."/>
            <person name="Chabrier P."/>
            <person name="Charpenteau J.-L."/>
            <person name="Desprez T."/>
            <person name="Amselem J."/>
            <person name="Chiapello H."/>
            <person name="Hoefte H."/>
        </authorList>
    </citation>
    <scope>NUCLEOTIDE SEQUENCE [LARGE SCALE MRNA] OF 58-154</scope>
    <source>
        <strain>cv. Columbia</strain>
        <tissue>Seedling</tissue>
    </source>
</reference>
<reference key="8">
    <citation type="journal article" date="1998" name="FEBS Lett.">
        <title>Computational analyses and annotations of the Arabidopsis peroxidase gene family.</title>
        <authorList>
            <person name="Oestergaard L."/>
            <person name="Pedersen A.G."/>
            <person name="Jespersen H.M."/>
            <person name="Brunak S."/>
            <person name="Welinder K.G."/>
        </authorList>
    </citation>
    <scope>CHARACTERIZATION</scope>
    <source>
        <strain>cv. Columbia</strain>
    </source>
</reference>
<reference key="9">
    <citation type="journal article" date="1998" name="Plant Physiol.">
        <title>Aluminum induces oxidative stress genes in Arabidopsis thaliana.</title>
        <authorList>
            <person name="Richards K.D."/>
            <person name="Schott E.J."/>
            <person name="Sharma Y.K."/>
            <person name="Davis K.R."/>
            <person name="Gardner R.C."/>
        </authorList>
    </citation>
    <scope>INDUCTION</scope>
    <source>
        <strain>cv. Columbia</strain>
    </source>
</reference>
<reference key="10">
    <citation type="journal article" date="2000" name="Plant Physiol.">
        <title>Expression of aluminum-induced genes in transgenic Arabidopsis plants can ameliorate aluminum stress and/or oxidative stress.</title>
        <authorList>
            <person name="Ezaki B."/>
            <person name="Gardner R.C."/>
            <person name="Ezaki Y."/>
            <person name="Matsumoto H."/>
        </authorList>
    </citation>
    <scope>INDUCTION</scope>
    <source>
        <strain>cv. Columbia</strain>
    </source>
</reference>
<reference key="11">
    <citation type="journal article" date="2000" name="Nat. Genet.">
        <title>The transcriptome of Arabidopsis thaliana during systemic acquired resistance.</title>
        <authorList>
            <person name="Maleck K."/>
            <person name="Levine A."/>
            <person name="Eulgem T."/>
            <person name="Morgan A."/>
            <person name="Schmid J."/>
            <person name="Lawton K.A."/>
            <person name="Dangl J.L."/>
            <person name="Dietrich R.A."/>
        </authorList>
    </citation>
    <scope>INDUCTION</scope>
    <source>
        <strain>cv. Wassilewskija</strain>
    </source>
</reference>
<reference key="12">
    <citation type="journal article" date="2002" name="Plant J.">
        <title>Monitoring the expression profiles of 7000 Arabidopsis genes under drought, cold and high-salinity stresses using a full-length cDNA microarray.</title>
        <authorList>
            <person name="Seki M."/>
            <person name="Narusaka M."/>
            <person name="Ishida J."/>
            <person name="Nanjo T."/>
            <person name="Fujita M."/>
            <person name="Oono Y."/>
            <person name="Kamiya A."/>
            <person name="Nakajima M."/>
            <person name="Enju A."/>
            <person name="Sakurai T."/>
            <person name="Satou M."/>
            <person name="Akiyama K."/>
            <person name="Taji T."/>
            <person name="Yamaguchi-Shinozaki K."/>
            <person name="Carninci P."/>
            <person name="Kawai J."/>
            <person name="Hayashizaki Y."/>
            <person name="Shinozaki K."/>
        </authorList>
    </citation>
    <scope>INDUCTION</scope>
    <source>
        <strain>cv. Columbia</strain>
    </source>
</reference>
<reference key="13">
    <citation type="journal article" date="2002" name="J. Biol. Chem.">
        <title>Monitoring the switch from housekeeping to pathogen defense metabolism in Arabidopsis thaliana using cDNA arrays.</title>
        <authorList>
            <person name="Scheideler M."/>
            <person name="Schlaich N.L."/>
            <person name="Fellenberg K."/>
            <person name="Beissbarth T."/>
            <person name="Hauser N.C."/>
            <person name="Vingron M."/>
            <person name="Slusarenko A.J."/>
            <person name="Hoheisel J.D."/>
        </authorList>
    </citation>
    <scope>INDUCTION</scope>
    <source>
        <strain>cv. Columbia</strain>
    </source>
</reference>
<reference key="14">
    <citation type="journal article" date="2001" name="Plant Physiol. Biochem.">
        <title>Toward elucidating the global gene expression patterns of developing Arabidopsis: parallel analysis of 8300 genes by a high-density oligonucleotide probe array.</title>
        <authorList>
            <person name="Zhu T."/>
            <person name="Budworth P."/>
            <person name="Han B."/>
            <person name="Brown D."/>
            <person name="Chang H.-S."/>
            <person name="Zou G."/>
            <person name="Wang X."/>
        </authorList>
    </citation>
    <scope>DEVELOPMENTAL STAGE</scope>
    <source>
        <strain>cv. Columbia</strain>
    </source>
</reference>
<reference key="15">
    <citation type="journal article" date="2002" name="Gene">
        <title>Analysis and expression of the class III peroxidase large gene family in Arabidopsis thaliana.</title>
        <authorList>
            <person name="Tognolli M."/>
            <person name="Penel C."/>
            <person name="Greppin H."/>
            <person name="Simon P."/>
        </authorList>
    </citation>
    <scope>GENE FAMILY ORGANIZATION</scope>
    <scope>NOMENCLATURE</scope>
    <source>
        <strain>cv. Columbia</strain>
    </source>
</reference>
<reference key="16">
    <citation type="journal article" date="2004" name="Phytochemistry">
        <title>Purification and identification of a Ca(2+)-pectate binding peroxidase from Arabidopsis leaves.</title>
        <authorList>
            <person name="Shah K."/>
            <person name="Penel C."/>
            <person name="Gagnon J."/>
            <person name="Dunand C."/>
        </authorList>
    </citation>
    <scope>CHARACTERIZATION</scope>
</reference>
<feature type="signal peptide" evidence="2">
    <location>
        <begin position="1"/>
        <end position="30"/>
    </location>
</feature>
<feature type="chain" id="PRO_0000023700" description="Peroxidase 34">
    <location>
        <begin position="31"/>
        <end position="353"/>
    </location>
</feature>
<feature type="active site" description="Proton acceptor" evidence="3 4">
    <location>
        <position position="72"/>
    </location>
</feature>
<feature type="binding site" evidence="3">
    <location>
        <position position="73"/>
    </location>
    <ligand>
        <name>Ca(2+)</name>
        <dbReference type="ChEBI" id="CHEBI:29108"/>
        <label>1</label>
    </ligand>
</feature>
<feature type="binding site" evidence="3">
    <location>
        <position position="76"/>
    </location>
    <ligand>
        <name>Ca(2+)</name>
        <dbReference type="ChEBI" id="CHEBI:29108"/>
        <label>1</label>
    </ligand>
</feature>
<feature type="binding site" evidence="3">
    <location>
        <position position="78"/>
    </location>
    <ligand>
        <name>Ca(2+)</name>
        <dbReference type="ChEBI" id="CHEBI:29108"/>
        <label>1</label>
    </ligand>
</feature>
<feature type="binding site" evidence="3">
    <location>
        <position position="80"/>
    </location>
    <ligand>
        <name>Ca(2+)</name>
        <dbReference type="ChEBI" id="CHEBI:29108"/>
        <label>1</label>
    </ligand>
</feature>
<feature type="binding site" evidence="3">
    <location>
        <position position="82"/>
    </location>
    <ligand>
        <name>Ca(2+)</name>
        <dbReference type="ChEBI" id="CHEBI:29108"/>
        <label>1</label>
    </ligand>
</feature>
<feature type="binding site" evidence="3">
    <location>
        <position position="169"/>
    </location>
    <ligand>
        <name>substrate</name>
    </ligand>
</feature>
<feature type="binding site" description="axial binding residue" evidence="3">
    <location>
        <position position="200"/>
    </location>
    <ligand>
        <name>heme b</name>
        <dbReference type="ChEBI" id="CHEBI:60344"/>
    </ligand>
    <ligandPart>
        <name>Fe</name>
        <dbReference type="ChEBI" id="CHEBI:18248"/>
    </ligandPart>
</feature>
<feature type="binding site" evidence="3">
    <location>
        <position position="201"/>
    </location>
    <ligand>
        <name>Ca(2+)</name>
        <dbReference type="ChEBI" id="CHEBI:29108"/>
        <label>2</label>
    </ligand>
</feature>
<feature type="binding site" evidence="3">
    <location>
        <position position="252"/>
    </location>
    <ligand>
        <name>Ca(2+)</name>
        <dbReference type="ChEBI" id="CHEBI:29108"/>
        <label>2</label>
    </ligand>
</feature>
<feature type="binding site" evidence="3">
    <location>
        <position position="255"/>
    </location>
    <ligand>
        <name>Ca(2+)</name>
        <dbReference type="ChEBI" id="CHEBI:29108"/>
        <label>2</label>
    </ligand>
</feature>
<feature type="binding site" evidence="3">
    <location>
        <position position="260"/>
    </location>
    <ligand>
        <name>Ca(2+)</name>
        <dbReference type="ChEBI" id="CHEBI:29108"/>
        <label>2</label>
    </ligand>
</feature>
<feature type="site" description="Transition state stabilizer" evidence="3">
    <location>
        <position position="68"/>
    </location>
</feature>
<feature type="modified residue" description="Pyrrolidone carboxylic acid" evidence="1 3">
    <location>
        <position position="31"/>
    </location>
</feature>
<feature type="glycosylation site" description="N-linked (GlcNAc...) asparagine" evidence="2">
    <location>
        <position position="43"/>
    </location>
</feature>
<feature type="glycosylation site" description="N-linked (GlcNAc...) asparagine" evidence="2">
    <location>
        <position position="87"/>
    </location>
</feature>
<feature type="glycosylation site" description="N-linked (GlcNAc...) asparagine" evidence="2">
    <location>
        <position position="216"/>
    </location>
</feature>
<feature type="glycosylation site" description="N-linked (GlcNAc...) asparagine" evidence="2">
    <location>
        <position position="228"/>
    </location>
</feature>
<feature type="glycosylation site" description="N-linked (GlcNAc...) asparagine" evidence="2">
    <location>
        <position position="244"/>
    </location>
</feature>
<feature type="glycosylation site" description="N-linked (GlcNAc...) asparagine" evidence="2">
    <location>
        <position position="285"/>
    </location>
</feature>
<feature type="disulfide bond" evidence="3">
    <location>
        <begin position="41"/>
        <end position="121"/>
    </location>
</feature>
<feature type="disulfide bond" evidence="3">
    <location>
        <begin position="74"/>
        <end position="79"/>
    </location>
</feature>
<feature type="disulfide bond" evidence="3">
    <location>
        <begin position="127"/>
        <end position="331"/>
    </location>
</feature>
<feature type="disulfide bond" evidence="3">
    <location>
        <begin position="207"/>
        <end position="239"/>
    </location>
</feature>
<feature type="sequence conflict" description="In Ref. 1; CAA50677." evidence="11" ref="1">
    <original>A</original>
    <variation>R</variation>
    <location>
        <position position="97"/>
    </location>
</feature>
<feature type="sequence conflict" description="In Ref. 4." evidence="11" ref="4">
    <original>P</original>
    <variation>S</variation>
    <location>
        <position position="176"/>
    </location>
</feature>
<feature type="sequence conflict" description="In Ref. 1; CAA50677." evidence="11" ref="1">
    <original>L</original>
    <variation>F</variation>
    <location>
        <position position="214"/>
    </location>
</feature>
<gene>
    <name type="primary">PER34</name>
    <name type="synonym">P34</name>
    <name type="synonym">PRXCB</name>
    <name type="ordered locus">At3g49120</name>
    <name type="ORF">F2K15.3</name>
    <name type="ORF">T2J13.40</name>
</gene>
<comment type="function">
    <text>Removal of H(2)O(2), oxidation of toxic reductants, biosynthesis and degradation of lignin, suberization, auxin catabolism, response to environmental stresses such as wounding, pathogen attack and oxidative stress. These functions might be dependent on each isozyme/isoform in each plant tissue.</text>
</comment>
<comment type="function">
    <text>May be implicated in the systemic acquired resistance response via the salicylic acid signal transduction pathway. Exhibits a Ca(2+)-pectate binding affinity which could be interpreted in vivo as a specificity to interact with the pectic structure of the cell wall.</text>
</comment>
<comment type="catalytic activity">
    <reaction>
        <text>2 a phenolic donor + H2O2 = 2 a phenolic radical donor + 2 H2O</text>
        <dbReference type="Rhea" id="RHEA:56136"/>
        <dbReference type="ChEBI" id="CHEBI:15377"/>
        <dbReference type="ChEBI" id="CHEBI:16240"/>
        <dbReference type="ChEBI" id="CHEBI:139520"/>
        <dbReference type="ChEBI" id="CHEBI:139521"/>
        <dbReference type="EC" id="1.11.1.7"/>
    </reaction>
</comment>
<comment type="cofactor">
    <cofactor evidence="3">
        <name>heme b</name>
        <dbReference type="ChEBI" id="CHEBI:60344"/>
    </cofactor>
    <text evidence="3">Binds 1 heme b (iron(II)-protoporphyrin IX) group per subunit.</text>
</comment>
<comment type="cofactor">
    <cofactor evidence="3">
        <name>Ca(2+)</name>
        <dbReference type="ChEBI" id="CHEBI:29108"/>
    </cofactor>
    <text evidence="3">Binds 2 calcium ions per subunit.</text>
</comment>
<comment type="subcellular location">
    <subcellularLocation>
        <location evidence="11">Secreted</location>
    </subcellularLocation>
    <subcellularLocation>
        <location evidence="11">Vacuole</location>
    </subcellularLocation>
    <text>Carboxy-terminal extension appears to target the protein to vacuoles.</text>
</comment>
<comment type="tissue specificity">
    <text>Preferentially expressed in roots, but also detected in flowers, leaves and stems.</text>
</comment>
<comment type="developmental stage">
    <text evidence="10">Up-regulated during leaf development.</text>
</comment>
<comment type="induction">
    <text evidence="5 6 7 8 9">Late-induced by Al treatment. Expression increased over 48 hours of Al treatment. Induced by oxidative stress. Up-regulated during a continuous drought stress. Early induced by benzothiadiazol, a chemical analog of salicylic acid. Enhanced expression following both compatible or incompatible pathogen attacks.</text>
</comment>
<comment type="miscellaneous">
    <text>There are 73 peroxidase genes in A.thaliana.</text>
</comment>
<comment type="similarity">
    <text evidence="3">Belongs to the peroxidase family. Classical plant (class III) peroxidase subfamily.</text>
</comment>
<comment type="sequence caution" evidence="11">
    <conflict type="frameshift">
        <sequence resource="EMBL-CDS" id="AAG40051"/>
    </conflict>
</comment>
<protein>
    <recommendedName>
        <fullName>Peroxidase 34</fullName>
        <shortName>Atperox P34</shortName>
        <ecNumber>1.11.1.7</ecNumber>
    </recommendedName>
    <alternativeName>
        <fullName>ATPCb</fullName>
    </alternativeName>
</protein>
<dbReference type="EC" id="1.11.1.7"/>
<dbReference type="EMBL" id="X71794">
    <property type="protein sequence ID" value="CAA50677.1"/>
    <property type="molecule type" value="mRNA"/>
</dbReference>
<dbReference type="EMBL" id="AL132956">
    <property type="status" value="NOT_ANNOTATED_CDS"/>
    <property type="molecule type" value="Genomic_DNA"/>
</dbReference>
<dbReference type="EMBL" id="AL132967">
    <property type="protein sequence ID" value="CAB61998.1"/>
    <property type="molecule type" value="Genomic_DNA"/>
</dbReference>
<dbReference type="EMBL" id="CP002686">
    <property type="protein sequence ID" value="AEE78501.1"/>
    <property type="molecule type" value="Genomic_DNA"/>
</dbReference>
<dbReference type="EMBL" id="AF324700">
    <property type="protein sequence ID" value="AAG40051.2"/>
    <property type="status" value="ALT_FRAME"/>
    <property type="molecule type" value="mRNA"/>
</dbReference>
<dbReference type="EMBL" id="AF326880">
    <property type="protein sequence ID" value="AAG41462.1"/>
    <property type="molecule type" value="mRNA"/>
</dbReference>
<dbReference type="EMBL" id="AF339700">
    <property type="protein sequence ID" value="AAK00382.1"/>
    <property type="molecule type" value="mRNA"/>
</dbReference>
<dbReference type="EMBL" id="AF419569">
    <property type="protein sequence ID" value="AAL31901.1"/>
    <property type="molecule type" value="mRNA"/>
</dbReference>
<dbReference type="EMBL" id="AY079106">
    <property type="protein sequence ID" value="AAL84990.1"/>
    <property type="molecule type" value="mRNA"/>
</dbReference>
<dbReference type="EMBL" id="AY087926">
    <property type="protein sequence ID" value="AAM65476.1"/>
    <property type="molecule type" value="mRNA"/>
</dbReference>
<dbReference type="EMBL" id="AF083684">
    <property type="protein sequence ID" value="AAN60243.1"/>
    <property type="molecule type" value="mRNA"/>
</dbReference>
<dbReference type="EMBL" id="Z29133">
    <property type="protein sequence ID" value="CAA82392.1"/>
    <property type="molecule type" value="mRNA"/>
</dbReference>
<dbReference type="PIR" id="S37495">
    <property type="entry name" value="S37495"/>
</dbReference>
<dbReference type="PIR" id="T46118">
    <property type="entry name" value="T46118"/>
</dbReference>
<dbReference type="RefSeq" id="NP_190481.1">
    <property type="nucleotide sequence ID" value="NM_114771.3"/>
</dbReference>
<dbReference type="SMR" id="Q9SMU8"/>
<dbReference type="BioGRID" id="9391">
    <property type="interactions" value="2"/>
</dbReference>
<dbReference type="FunCoup" id="Q9SMU8">
    <property type="interactions" value="128"/>
</dbReference>
<dbReference type="STRING" id="3702.Q9SMU8"/>
<dbReference type="PeroxiBase" id="200">
    <property type="entry name" value="AtPrx34"/>
</dbReference>
<dbReference type="GlyCosmos" id="Q9SMU8">
    <property type="glycosylation" value="6 sites, No reported glycans"/>
</dbReference>
<dbReference type="GlyGen" id="Q9SMU8">
    <property type="glycosylation" value="7 sites"/>
</dbReference>
<dbReference type="PaxDb" id="3702-AT3G49120.1"/>
<dbReference type="ProteomicsDB" id="236453"/>
<dbReference type="EnsemblPlants" id="AT3G49120.1">
    <property type="protein sequence ID" value="AT3G49120.1"/>
    <property type="gene ID" value="AT3G49120"/>
</dbReference>
<dbReference type="GeneID" id="824073"/>
<dbReference type="Gramene" id="AT3G49120.1">
    <property type="protein sequence ID" value="AT3G49120.1"/>
    <property type="gene ID" value="AT3G49120"/>
</dbReference>
<dbReference type="KEGG" id="ath:AT3G49120"/>
<dbReference type="Araport" id="AT3G49120"/>
<dbReference type="TAIR" id="AT3G49120">
    <property type="gene designation" value="PRXCB"/>
</dbReference>
<dbReference type="eggNOG" id="ENOG502QVXS">
    <property type="taxonomic scope" value="Eukaryota"/>
</dbReference>
<dbReference type="HOGENOM" id="CLU_010543_0_1_1"/>
<dbReference type="InParanoid" id="Q9SMU8"/>
<dbReference type="OMA" id="QCNFING"/>
<dbReference type="PhylomeDB" id="Q9SMU8"/>
<dbReference type="BioCyc" id="ARA:AT3G49120-MONOMER"/>
<dbReference type="CD-CODE" id="4299E36E">
    <property type="entry name" value="Nucleolus"/>
</dbReference>
<dbReference type="PRO" id="PR:Q9SMU8"/>
<dbReference type="Proteomes" id="UP000006548">
    <property type="component" value="Chromosome 3"/>
</dbReference>
<dbReference type="ExpressionAtlas" id="Q9SMU8">
    <property type="expression patterns" value="baseline and differential"/>
</dbReference>
<dbReference type="GO" id="GO:0048046">
    <property type="term" value="C:apoplast"/>
    <property type="evidence" value="ECO:0007005"/>
    <property type="project" value="TAIR"/>
</dbReference>
<dbReference type="GO" id="GO:0005829">
    <property type="term" value="C:cytosol"/>
    <property type="evidence" value="ECO:0007005"/>
    <property type="project" value="TAIR"/>
</dbReference>
<dbReference type="GO" id="GO:0005794">
    <property type="term" value="C:Golgi apparatus"/>
    <property type="evidence" value="ECO:0007005"/>
    <property type="project" value="TAIR"/>
</dbReference>
<dbReference type="GO" id="GO:0009505">
    <property type="term" value="C:plant-type cell wall"/>
    <property type="evidence" value="ECO:0000314"/>
    <property type="project" value="TAIR"/>
</dbReference>
<dbReference type="GO" id="GO:0000325">
    <property type="term" value="C:plant-type vacuole"/>
    <property type="evidence" value="ECO:0007005"/>
    <property type="project" value="TAIR"/>
</dbReference>
<dbReference type="GO" id="GO:0099503">
    <property type="term" value="C:secretory vesicle"/>
    <property type="evidence" value="ECO:0007005"/>
    <property type="project" value="TAIR"/>
</dbReference>
<dbReference type="GO" id="GO:0020037">
    <property type="term" value="F:heme binding"/>
    <property type="evidence" value="ECO:0007669"/>
    <property type="project" value="InterPro"/>
</dbReference>
<dbReference type="GO" id="GO:0140825">
    <property type="term" value="F:lactoperoxidase activity"/>
    <property type="evidence" value="ECO:0007669"/>
    <property type="project" value="UniProtKB-EC"/>
</dbReference>
<dbReference type="GO" id="GO:0046872">
    <property type="term" value="F:metal ion binding"/>
    <property type="evidence" value="ECO:0007669"/>
    <property type="project" value="UniProtKB-KW"/>
</dbReference>
<dbReference type="GO" id="GO:0004601">
    <property type="term" value="F:peroxidase activity"/>
    <property type="evidence" value="ECO:0000315"/>
    <property type="project" value="TAIR"/>
</dbReference>
<dbReference type="GO" id="GO:0006952">
    <property type="term" value="P:defense response"/>
    <property type="evidence" value="ECO:0000315"/>
    <property type="project" value="TAIR"/>
</dbReference>
<dbReference type="GO" id="GO:0042742">
    <property type="term" value="P:defense response to bacterium"/>
    <property type="evidence" value="ECO:0000315"/>
    <property type="project" value="TAIR"/>
</dbReference>
<dbReference type="GO" id="GO:0050832">
    <property type="term" value="P:defense response to fungus"/>
    <property type="evidence" value="ECO:0000315"/>
    <property type="project" value="TAIR"/>
</dbReference>
<dbReference type="GO" id="GO:0042744">
    <property type="term" value="P:hydrogen peroxide catabolic process"/>
    <property type="evidence" value="ECO:0007669"/>
    <property type="project" value="UniProtKB-KW"/>
</dbReference>
<dbReference type="GO" id="GO:0002221">
    <property type="term" value="P:pattern recognition receptor signaling pathway"/>
    <property type="evidence" value="ECO:0000315"/>
    <property type="project" value="TAIR"/>
</dbReference>
<dbReference type="GO" id="GO:0072593">
    <property type="term" value="P:reactive oxygen species metabolic process"/>
    <property type="evidence" value="ECO:0000315"/>
    <property type="project" value="TAIR"/>
</dbReference>
<dbReference type="GO" id="GO:0009416">
    <property type="term" value="P:response to light stimulus"/>
    <property type="evidence" value="ECO:0000270"/>
    <property type="project" value="TAIR"/>
</dbReference>
<dbReference type="GO" id="GO:0006979">
    <property type="term" value="P:response to oxidative stress"/>
    <property type="evidence" value="ECO:0007669"/>
    <property type="project" value="InterPro"/>
</dbReference>
<dbReference type="GO" id="GO:0009826">
    <property type="term" value="P:unidimensional cell growth"/>
    <property type="evidence" value="ECO:0000315"/>
    <property type="project" value="TAIR"/>
</dbReference>
<dbReference type="CDD" id="cd00693">
    <property type="entry name" value="secretory_peroxidase"/>
    <property type="match status" value="1"/>
</dbReference>
<dbReference type="FunFam" id="1.10.420.10:FF:000001">
    <property type="entry name" value="Peroxidase"/>
    <property type="match status" value="1"/>
</dbReference>
<dbReference type="FunFam" id="1.10.520.10:FF:000001">
    <property type="entry name" value="Peroxidase"/>
    <property type="match status" value="1"/>
</dbReference>
<dbReference type="Gene3D" id="1.10.520.10">
    <property type="match status" value="1"/>
</dbReference>
<dbReference type="Gene3D" id="1.10.420.10">
    <property type="entry name" value="Peroxidase, domain 2"/>
    <property type="match status" value="1"/>
</dbReference>
<dbReference type="InterPro" id="IPR002016">
    <property type="entry name" value="Haem_peroxidase"/>
</dbReference>
<dbReference type="InterPro" id="IPR010255">
    <property type="entry name" value="Haem_peroxidase_sf"/>
</dbReference>
<dbReference type="InterPro" id="IPR000823">
    <property type="entry name" value="Peroxidase_pln"/>
</dbReference>
<dbReference type="InterPro" id="IPR019794">
    <property type="entry name" value="Peroxidases_AS"/>
</dbReference>
<dbReference type="InterPro" id="IPR019793">
    <property type="entry name" value="Peroxidases_heam-ligand_BS"/>
</dbReference>
<dbReference type="InterPro" id="IPR033905">
    <property type="entry name" value="Secretory_peroxidase"/>
</dbReference>
<dbReference type="PANTHER" id="PTHR31388:SF141">
    <property type="entry name" value="PEROXIDASE 33-RELATED"/>
    <property type="match status" value="1"/>
</dbReference>
<dbReference type="PANTHER" id="PTHR31388">
    <property type="entry name" value="PEROXIDASE 72-RELATED"/>
    <property type="match status" value="1"/>
</dbReference>
<dbReference type="Pfam" id="PF00141">
    <property type="entry name" value="peroxidase"/>
    <property type="match status" value="1"/>
</dbReference>
<dbReference type="PRINTS" id="PR00458">
    <property type="entry name" value="PEROXIDASE"/>
</dbReference>
<dbReference type="PRINTS" id="PR00461">
    <property type="entry name" value="PLPEROXIDASE"/>
</dbReference>
<dbReference type="SUPFAM" id="SSF48113">
    <property type="entry name" value="Heme-dependent peroxidases"/>
    <property type="match status" value="1"/>
</dbReference>
<dbReference type="PROSITE" id="PS00435">
    <property type="entry name" value="PEROXIDASE_1"/>
    <property type="match status" value="1"/>
</dbReference>
<dbReference type="PROSITE" id="PS00436">
    <property type="entry name" value="PEROXIDASE_2"/>
    <property type="match status" value="1"/>
</dbReference>
<dbReference type="PROSITE" id="PS50873">
    <property type="entry name" value="PEROXIDASE_4"/>
    <property type="match status" value="1"/>
</dbReference>
<keyword id="KW-0106">Calcium</keyword>
<keyword id="KW-1015">Disulfide bond</keyword>
<keyword id="KW-0325">Glycoprotein</keyword>
<keyword id="KW-0349">Heme</keyword>
<keyword id="KW-0376">Hydrogen peroxide</keyword>
<keyword id="KW-0408">Iron</keyword>
<keyword id="KW-0479">Metal-binding</keyword>
<keyword id="KW-0560">Oxidoreductase</keyword>
<keyword id="KW-0575">Peroxidase</keyword>
<keyword id="KW-0873">Pyrrolidone carboxylic acid</keyword>
<keyword id="KW-1185">Reference proteome</keyword>
<keyword id="KW-0964">Secreted</keyword>
<keyword id="KW-0732">Signal</keyword>
<keyword id="KW-0926">Vacuole</keyword>
<sequence length="353" mass="38832">MHFSSSSTSSTWTILITLGCLMLHASLSAAQLTPTFYDRSCPNVTNIVRETIVNELRSDPRIAASILRLHFHDCFVNGCDASILLDNTTSFRTEKDAFGNANSARGFPVIDRMKAAVERACPRTVSCADMLTIAAQQSVTLAGGPSWRVPLGRRDSLQAFLELANANLPAPFFTLPQLKASFRNVGLDRPSDLVALSGGHTFGKNQCQFILDRLYNFSNTGLPDPTLNTTYLQTLRGLCPLNGNRSALVDFDLRTPTVFDNKYYVNLKERKGLIQSDQELFSSPNATDTIPLVRAYADGTQTFFNAFVEAMNRMGNITPTTGTQGQIRLNCRVVNSNSLLHDVVDIVDFVSSM</sequence>
<name>PER34_ARATH</name>